<proteinExistence type="inferred from homology"/>
<protein>
    <recommendedName>
        <fullName evidence="1">Small ribosomal subunit protein uS2c</fullName>
    </recommendedName>
    <alternativeName>
        <fullName>30S ribosomal protein S2, chloroplastic</fullName>
    </alternativeName>
</protein>
<gene>
    <name type="primary">rps2</name>
</gene>
<feature type="chain" id="PRO_0000277569" description="Small ribosomal subunit protein uS2c">
    <location>
        <begin position="1"/>
        <end position="236"/>
    </location>
</feature>
<geneLocation type="chloroplast"/>
<keyword id="KW-0150">Chloroplast</keyword>
<keyword id="KW-0934">Plastid</keyword>
<keyword id="KW-1185">Reference proteome</keyword>
<keyword id="KW-0687">Ribonucleoprotein</keyword>
<keyword id="KW-0689">Ribosomal protein</keyword>
<dbReference type="EMBL" id="DQ231562">
    <property type="protein sequence ID" value="ABB90032.1"/>
    <property type="molecule type" value="Genomic_DNA"/>
</dbReference>
<dbReference type="EMBL" id="DQ386163">
    <property type="protein sequence ID" value="ABD47046.1"/>
    <property type="molecule type" value="Genomic_DNA"/>
</dbReference>
<dbReference type="RefSeq" id="YP_635628.1">
    <property type="nucleotide sequence ID" value="NC_008096.2"/>
</dbReference>
<dbReference type="SMR" id="Q2VEI7"/>
<dbReference type="FunCoup" id="Q2VEI7">
    <property type="interactions" value="607"/>
</dbReference>
<dbReference type="STRING" id="4113.Q2VEI7"/>
<dbReference type="PaxDb" id="4113-PGSC0003DMT400045540"/>
<dbReference type="GeneID" id="4099858"/>
<dbReference type="KEGG" id="sot:4099858"/>
<dbReference type="eggNOG" id="KOG0832">
    <property type="taxonomic scope" value="Eukaryota"/>
</dbReference>
<dbReference type="eggNOG" id="KOG4665">
    <property type="taxonomic scope" value="Eukaryota"/>
</dbReference>
<dbReference type="InParanoid" id="Q2VEI7"/>
<dbReference type="OrthoDB" id="565471at2759"/>
<dbReference type="Proteomes" id="UP000011115">
    <property type="component" value="Unassembled WGS sequence"/>
</dbReference>
<dbReference type="ExpressionAtlas" id="Q2VEI7">
    <property type="expression patterns" value="baseline"/>
</dbReference>
<dbReference type="GO" id="GO:0009507">
    <property type="term" value="C:chloroplast"/>
    <property type="evidence" value="ECO:0007669"/>
    <property type="project" value="UniProtKB-SubCell"/>
</dbReference>
<dbReference type="GO" id="GO:0005763">
    <property type="term" value="C:mitochondrial small ribosomal subunit"/>
    <property type="evidence" value="ECO:0000318"/>
    <property type="project" value="GO_Central"/>
</dbReference>
<dbReference type="GO" id="GO:0003735">
    <property type="term" value="F:structural constituent of ribosome"/>
    <property type="evidence" value="ECO:0000318"/>
    <property type="project" value="GO_Central"/>
</dbReference>
<dbReference type="GO" id="GO:0006412">
    <property type="term" value="P:translation"/>
    <property type="evidence" value="ECO:0007669"/>
    <property type="project" value="UniProtKB-UniRule"/>
</dbReference>
<dbReference type="CDD" id="cd01425">
    <property type="entry name" value="RPS2"/>
    <property type="match status" value="1"/>
</dbReference>
<dbReference type="FunFam" id="3.40.50.10490:FF:000101">
    <property type="match status" value="1"/>
</dbReference>
<dbReference type="FunFam" id="1.10.287.610:FF:000001">
    <property type="entry name" value="30S ribosomal protein S2"/>
    <property type="match status" value="1"/>
</dbReference>
<dbReference type="FunFam" id="3.40.50.10490:FF:000008">
    <property type="entry name" value="30S ribosomal protein S2, chloroplastic"/>
    <property type="match status" value="1"/>
</dbReference>
<dbReference type="Gene3D" id="3.40.50.10490">
    <property type="entry name" value="Glucose-6-phosphate isomerase like protein, domain 1"/>
    <property type="match status" value="1"/>
</dbReference>
<dbReference type="Gene3D" id="1.10.287.610">
    <property type="entry name" value="Helix hairpin bin"/>
    <property type="match status" value="1"/>
</dbReference>
<dbReference type="HAMAP" id="MF_00291_B">
    <property type="entry name" value="Ribosomal_uS2_B"/>
    <property type="match status" value="1"/>
</dbReference>
<dbReference type="InterPro" id="IPR001865">
    <property type="entry name" value="Ribosomal_uS2"/>
</dbReference>
<dbReference type="InterPro" id="IPR005706">
    <property type="entry name" value="Ribosomal_uS2_bac/mit/plastid"/>
</dbReference>
<dbReference type="InterPro" id="IPR018130">
    <property type="entry name" value="Ribosomal_uS2_CS"/>
</dbReference>
<dbReference type="InterPro" id="IPR023591">
    <property type="entry name" value="Ribosomal_uS2_flav_dom_sf"/>
</dbReference>
<dbReference type="NCBIfam" id="TIGR01011">
    <property type="entry name" value="rpsB_bact"/>
    <property type="match status" value="1"/>
</dbReference>
<dbReference type="PANTHER" id="PTHR12534">
    <property type="entry name" value="30S RIBOSOMAL PROTEIN S2 PROKARYOTIC AND ORGANELLAR"/>
    <property type="match status" value="1"/>
</dbReference>
<dbReference type="PANTHER" id="PTHR12534:SF0">
    <property type="entry name" value="SMALL RIBOSOMAL SUBUNIT PROTEIN US2M"/>
    <property type="match status" value="1"/>
</dbReference>
<dbReference type="Pfam" id="PF00318">
    <property type="entry name" value="Ribosomal_S2"/>
    <property type="match status" value="1"/>
</dbReference>
<dbReference type="PRINTS" id="PR00395">
    <property type="entry name" value="RIBOSOMALS2"/>
</dbReference>
<dbReference type="SUPFAM" id="SSF52313">
    <property type="entry name" value="Ribosomal protein S2"/>
    <property type="match status" value="1"/>
</dbReference>
<dbReference type="PROSITE" id="PS00962">
    <property type="entry name" value="RIBOSOMAL_S2_1"/>
    <property type="match status" value="1"/>
</dbReference>
<dbReference type="PROSITE" id="PS00963">
    <property type="entry name" value="RIBOSOMAL_S2_2"/>
    <property type="match status" value="1"/>
</dbReference>
<organism>
    <name type="scientific">Solanum tuberosum</name>
    <name type="common">Potato</name>
    <dbReference type="NCBI Taxonomy" id="4113"/>
    <lineage>
        <taxon>Eukaryota</taxon>
        <taxon>Viridiplantae</taxon>
        <taxon>Streptophyta</taxon>
        <taxon>Embryophyta</taxon>
        <taxon>Tracheophyta</taxon>
        <taxon>Spermatophyta</taxon>
        <taxon>Magnoliopsida</taxon>
        <taxon>eudicotyledons</taxon>
        <taxon>Gunneridae</taxon>
        <taxon>Pentapetalae</taxon>
        <taxon>asterids</taxon>
        <taxon>lamiids</taxon>
        <taxon>Solanales</taxon>
        <taxon>Solanaceae</taxon>
        <taxon>Solanoideae</taxon>
        <taxon>Solaneae</taxon>
        <taxon>Solanum</taxon>
    </lineage>
</organism>
<sequence length="236" mass="26943">MTRRYWNINLEEMMEAGVHFGHGTRKWNPKMAPYISAKRKGIHITNLTRTARFLSEACDLVFDAASRGKQFLIVGTKNKAADSVEWAAIRARCHYVNKKWLGGMLTNWSTTETRLHKFRDLRMEQKTGRLNRLPKRDAAMLKRQLSRLQTYLGGIKYMTGVPDIVIIVDQHEEYTALRECITLGIPTICLTDTNCDPDLADISIPANDDAISSIRLILNKLVFAICEGRSSYIRNP</sequence>
<accession>Q2VEI7</accession>
<reference key="1">
    <citation type="journal article" date="2006" name="Plant Cell Rep.">
        <title>The complete chloroplast genome sequences of Solanum tuberosum and comparative analysis with Solanaceae species identified the presence of a 241-bp deletion in cultivated potato chloroplast DNA sequence.</title>
        <authorList>
            <person name="Chung H.-J."/>
            <person name="Jung J.D."/>
            <person name="Park H.-W."/>
            <person name="Kim J.-H."/>
            <person name="Cha H.W."/>
            <person name="Min S.R."/>
            <person name="Jeong W.-J."/>
            <person name="Liu J.R."/>
        </authorList>
    </citation>
    <scope>NUCLEOTIDE SEQUENCE [LARGE SCALE GENOMIC DNA]</scope>
    <source>
        <strain>cv. Desiree</strain>
    </source>
</reference>
<reference key="2">
    <citation type="submission" date="2006-02" db="EMBL/GenBank/DDBJ databases">
        <title>Complete chloroplast genome sequences of Solanum tuberosum cultivar Desiree and comparative analyses with other Solanaceae genomes.</title>
        <authorList>
            <person name="Gargano D."/>
            <person name="Scotti N."/>
            <person name="Vezzi A."/>
            <person name="Bilardi A."/>
            <person name="Valle G."/>
            <person name="Grillo S."/>
            <person name="Cardi T."/>
        </authorList>
    </citation>
    <scope>NUCLEOTIDE SEQUENCE [LARGE SCALE GENOMIC DNA]</scope>
    <source>
        <strain>cv. Desiree</strain>
    </source>
</reference>
<name>RR2_SOLTU</name>
<comment type="subcellular location">
    <subcellularLocation>
        <location>Plastid</location>
        <location>Chloroplast</location>
    </subcellularLocation>
</comment>
<comment type="similarity">
    <text evidence="1">Belongs to the universal ribosomal protein uS2 family.</text>
</comment>
<evidence type="ECO:0000305" key="1"/>